<dbReference type="EMBL" id="X55897">
    <property type="protein sequence ID" value="CAA39386.1"/>
    <property type="molecule type" value="Genomic_RNA"/>
</dbReference>
<dbReference type="PIR" id="S12170">
    <property type="entry name" value="S12170"/>
</dbReference>
<dbReference type="SMR" id="P22625"/>
<dbReference type="GO" id="GO:0003677">
    <property type="term" value="F:DNA binding"/>
    <property type="evidence" value="ECO:0007669"/>
    <property type="project" value="UniProtKB-KW"/>
</dbReference>
<dbReference type="GO" id="GO:0008270">
    <property type="term" value="F:zinc ion binding"/>
    <property type="evidence" value="ECO:0007669"/>
    <property type="project" value="UniProtKB-KW"/>
</dbReference>
<dbReference type="GO" id="GO:0006355">
    <property type="term" value="P:regulation of DNA-templated transcription"/>
    <property type="evidence" value="ECO:0007669"/>
    <property type="project" value="InterPro"/>
</dbReference>
<dbReference type="GO" id="GO:0052170">
    <property type="term" value="P:symbiont-mediated suppression of host innate immune response"/>
    <property type="evidence" value="ECO:0007669"/>
    <property type="project" value="UniProtKB-KW"/>
</dbReference>
<dbReference type="InterPro" id="IPR002568">
    <property type="entry name" value="Carla-bd"/>
</dbReference>
<dbReference type="Pfam" id="PF01623">
    <property type="entry name" value="Carla_C4"/>
    <property type="match status" value="1"/>
</dbReference>
<keyword id="KW-0238">DNA-binding</keyword>
<keyword id="KW-0945">Host-virus interaction</keyword>
<keyword id="KW-1090">Inhibition of host innate immune response by virus</keyword>
<keyword id="KW-0479">Metal-binding</keyword>
<keyword id="KW-0941">Suppressor of RNA silencing</keyword>
<keyword id="KW-0899">Viral immunoevasion</keyword>
<keyword id="KW-0862">Zinc</keyword>
<keyword id="KW-0863">Zinc-finger</keyword>
<organismHost>
    <name type="scientific">Dianthus caryophyllus</name>
    <name type="common">Carnation</name>
    <name type="synonym">Clove pink</name>
    <dbReference type="NCBI Taxonomy" id="3570"/>
</organismHost>
<organism>
    <name type="scientific">Carnation latent virus</name>
    <name type="common">CLV</name>
    <dbReference type="NCBI Taxonomy" id="12164"/>
    <lineage>
        <taxon>Viruses</taxon>
        <taxon>Riboviria</taxon>
        <taxon>Orthornavirae</taxon>
        <taxon>Kitrinoviricota</taxon>
        <taxon>Alsuviricetes</taxon>
        <taxon>Tymovirales</taxon>
        <taxon>Betaflexiviridae</taxon>
        <taxon>Quinvirinae</taxon>
        <taxon>Carlavirus</taxon>
    </lineage>
</organism>
<name>VSR_CLV</name>
<accession>P22625</accession>
<proteinExistence type="inferred from homology"/>
<comment type="function">
    <text evidence="1">Suppressor of viral-induced RNA silencing. The potential mechanism of action is based on sequestering siRNAs (By similarity).</text>
</comment>
<comment type="similarity">
    <text evidence="3">Belongs to the carlaviruses nucleic acid-binding protein family.</text>
</comment>
<reference key="1">
    <citation type="journal article" date="1990" name="Nucleic Acids Res.">
        <title>Conservation of the 3' terminal nucleotide sequence in five carlaviruses.</title>
        <authorList>
            <person name="Taylor M.T.M."/>
            <person name="Brunt A.A."/>
            <person name="Coutts R.H.A."/>
        </authorList>
    </citation>
    <scope>NUCLEOTIDE SEQUENCE [GENOMIC RNA]</scope>
</reference>
<sequence>MRERKLRKQLEDLFKRFASVQHGHSDCINIIIAKIKSDQPGESKYARRRRAKSIARCPRCARVSPGFYFTTRCDGKTCRPGLSARPDLLEFIGIDLCVRSK</sequence>
<evidence type="ECO:0000250" key="1"/>
<evidence type="ECO:0000255" key="2"/>
<evidence type="ECO:0000305" key="3"/>
<protein>
    <recommendedName>
        <fullName>RNA silencing suppressor</fullName>
    </recommendedName>
    <alternativeName>
        <fullName>11.6 kDa protein</fullName>
    </alternativeName>
    <alternativeName>
        <fullName>Putative nucleic acid-binding protein</fullName>
    </alternativeName>
</protein>
<feature type="chain" id="PRO_0000222652" description="RNA silencing suppressor">
    <location>
        <begin position="1"/>
        <end position="101"/>
    </location>
</feature>
<feature type="zinc finger region" description="C4-type" evidence="2">
    <location>
        <begin position="57"/>
        <end position="78"/>
    </location>
</feature>
<feature type="region of interest" description="Basic" evidence="1">
    <location>
        <begin position="47"/>
        <end position="50"/>
    </location>
</feature>
<gene>
    <name type="primary">TUC</name>
</gene>